<keyword id="KW-0067">ATP-binding</keyword>
<keyword id="KW-0347">Helicase</keyword>
<keyword id="KW-0378">Hydrolase</keyword>
<keyword id="KW-0507">mRNA processing</keyword>
<keyword id="KW-0508">mRNA splicing</keyword>
<keyword id="KW-0547">Nucleotide-binding</keyword>
<keyword id="KW-0539">Nucleus</keyword>
<keyword id="KW-1185">Reference proteome</keyword>
<reference key="1">
    <citation type="journal article" date="2002" name="Nature">
        <title>Sequence and analysis of chromosome 2 of Dictyostelium discoideum.</title>
        <authorList>
            <person name="Gloeckner G."/>
            <person name="Eichinger L."/>
            <person name="Szafranski K."/>
            <person name="Pachebat J.A."/>
            <person name="Bankier A.T."/>
            <person name="Dear P.H."/>
            <person name="Lehmann R."/>
            <person name="Baumgart C."/>
            <person name="Parra G."/>
            <person name="Abril J.F."/>
            <person name="Guigo R."/>
            <person name="Kumpf K."/>
            <person name="Tunggal B."/>
            <person name="Cox E.C."/>
            <person name="Quail M.A."/>
            <person name="Platzer M."/>
            <person name="Rosenthal A."/>
            <person name="Noegel A.A."/>
        </authorList>
    </citation>
    <scope>NUCLEOTIDE SEQUENCE [LARGE SCALE GENOMIC DNA]</scope>
    <source>
        <strain>AX4</strain>
    </source>
</reference>
<reference key="2">
    <citation type="journal article" date="2005" name="Nature">
        <title>The genome of the social amoeba Dictyostelium discoideum.</title>
        <authorList>
            <person name="Eichinger L."/>
            <person name="Pachebat J.A."/>
            <person name="Gloeckner G."/>
            <person name="Rajandream M.A."/>
            <person name="Sucgang R."/>
            <person name="Berriman M."/>
            <person name="Song J."/>
            <person name="Olsen R."/>
            <person name="Szafranski K."/>
            <person name="Xu Q."/>
            <person name="Tunggal B."/>
            <person name="Kummerfeld S."/>
            <person name="Madera M."/>
            <person name="Konfortov B.A."/>
            <person name="Rivero F."/>
            <person name="Bankier A.T."/>
            <person name="Lehmann R."/>
            <person name="Hamlin N."/>
            <person name="Davies R."/>
            <person name="Gaudet P."/>
            <person name="Fey P."/>
            <person name="Pilcher K."/>
            <person name="Chen G."/>
            <person name="Saunders D."/>
            <person name="Sodergren E.J."/>
            <person name="Davis P."/>
            <person name="Kerhornou A."/>
            <person name="Nie X."/>
            <person name="Hall N."/>
            <person name="Anjard C."/>
            <person name="Hemphill L."/>
            <person name="Bason N."/>
            <person name="Farbrother P."/>
            <person name="Desany B."/>
            <person name="Just E."/>
            <person name="Morio T."/>
            <person name="Rost R."/>
            <person name="Churcher C.M."/>
            <person name="Cooper J."/>
            <person name="Haydock S."/>
            <person name="van Driessche N."/>
            <person name="Cronin A."/>
            <person name="Goodhead I."/>
            <person name="Muzny D.M."/>
            <person name="Mourier T."/>
            <person name="Pain A."/>
            <person name="Lu M."/>
            <person name="Harper D."/>
            <person name="Lindsay R."/>
            <person name="Hauser H."/>
            <person name="James K.D."/>
            <person name="Quiles M."/>
            <person name="Madan Babu M."/>
            <person name="Saito T."/>
            <person name="Buchrieser C."/>
            <person name="Wardroper A."/>
            <person name="Felder M."/>
            <person name="Thangavelu M."/>
            <person name="Johnson D."/>
            <person name="Knights A."/>
            <person name="Loulseged H."/>
            <person name="Mungall K.L."/>
            <person name="Oliver K."/>
            <person name="Price C."/>
            <person name="Quail M.A."/>
            <person name="Urushihara H."/>
            <person name="Hernandez J."/>
            <person name="Rabbinowitsch E."/>
            <person name="Steffen D."/>
            <person name="Sanders M."/>
            <person name="Ma J."/>
            <person name="Kohara Y."/>
            <person name="Sharp S."/>
            <person name="Simmonds M.N."/>
            <person name="Spiegler S."/>
            <person name="Tivey A."/>
            <person name="Sugano S."/>
            <person name="White B."/>
            <person name="Walker D."/>
            <person name="Woodward J.R."/>
            <person name="Winckler T."/>
            <person name="Tanaka Y."/>
            <person name="Shaulsky G."/>
            <person name="Schleicher M."/>
            <person name="Weinstock G.M."/>
            <person name="Rosenthal A."/>
            <person name="Cox E.C."/>
            <person name="Chisholm R.L."/>
            <person name="Gibbs R.A."/>
            <person name="Loomis W.F."/>
            <person name="Platzer M."/>
            <person name="Kay R.R."/>
            <person name="Williams J.G."/>
            <person name="Dear P.H."/>
            <person name="Noegel A.A."/>
            <person name="Barrell B.G."/>
            <person name="Kuspa A."/>
        </authorList>
    </citation>
    <scope>NUCLEOTIDE SEQUENCE [LARGE SCALE GENOMIC DNA]</scope>
    <source>
        <strain>AX4</strain>
    </source>
</reference>
<reference key="3">
    <citation type="journal article" date="1994" name="Biol. Chem. Hoppe-Seyler">
        <title>Developmental regulation of DEAD box proteins and cloning of putative RNA helicase genes from Dictyostelium discoideum.</title>
        <authorList>
            <person name="Mahal B."/>
            <person name="Nellen W."/>
        </authorList>
    </citation>
    <scope>NUCLEOTIDE SEQUENCE [MRNA] OF 490-1066</scope>
    <source>
        <strain>AX2</strain>
    </source>
</reference>
<organism>
    <name type="scientific">Dictyostelium discoideum</name>
    <name type="common">Social amoeba</name>
    <dbReference type="NCBI Taxonomy" id="44689"/>
    <lineage>
        <taxon>Eukaryota</taxon>
        <taxon>Amoebozoa</taxon>
        <taxon>Evosea</taxon>
        <taxon>Eumycetozoa</taxon>
        <taxon>Dictyostelia</taxon>
        <taxon>Dictyosteliales</taxon>
        <taxon>Dictyosteliaceae</taxon>
        <taxon>Dictyostelium</taxon>
    </lineage>
</organism>
<accession>Q553B1</accession>
<accession>Q23909</accession>
<accession>Q869K2</accession>
<evidence type="ECO:0000250" key="1">
    <source>
        <dbReference type="UniProtKB" id="Q7L014"/>
    </source>
</evidence>
<evidence type="ECO:0000255" key="2">
    <source>
        <dbReference type="PROSITE-ProRule" id="PRU00541"/>
    </source>
</evidence>
<evidence type="ECO:0000255" key="3">
    <source>
        <dbReference type="PROSITE-ProRule" id="PRU00542"/>
    </source>
</evidence>
<evidence type="ECO:0000256" key="4">
    <source>
        <dbReference type="SAM" id="MobiDB-lite"/>
    </source>
</evidence>
<evidence type="ECO:0000305" key="5"/>
<protein>
    <recommendedName>
        <fullName>ATP-dependent RNA helicase ddx46</fullName>
        <ecNumber>3.6.4.13</ecNumber>
    </recommendedName>
    <alternativeName>
        <fullName>ATP-dependent RNA helicase helB1</fullName>
    </alternativeName>
    <alternativeName>
        <fullName>DEAD box protein 46</fullName>
    </alternativeName>
</protein>
<comment type="function">
    <text evidence="1">Component of the 17S U2 SnRNP complex of the spliceosome, a large ribonucleoprotein complex that removes introns from transcribed pre-mRNAs.</text>
</comment>
<comment type="catalytic activity">
    <reaction>
        <text>ATP + H2O = ADP + phosphate + H(+)</text>
        <dbReference type="Rhea" id="RHEA:13065"/>
        <dbReference type="ChEBI" id="CHEBI:15377"/>
        <dbReference type="ChEBI" id="CHEBI:15378"/>
        <dbReference type="ChEBI" id="CHEBI:30616"/>
        <dbReference type="ChEBI" id="CHEBI:43474"/>
        <dbReference type="ChEBI" id="CHEBI:456216"/>
        <dbReference type="EC" id="3.6.4.13"/>
    </reaction>
</comment>
<comment type="subunit">
    <text evidence="1">Component of the 17S U2 SnRNP complex, a ribonucleoprotein complex that contains small nuclear RNA (snRNA) U2 and a number of specific proteins.</text>
</comment>
<comment type="subcellular location">
    <subcellularLocation>
        <location evidence="1">Nucleus speckle</location>
    </subcellularLocation>
</comment>
<comment type="domain">
    <text>The Q motif is unique to and characteristic of the DEAD box family of RNA helicases and controls ATP binding and hydrolysis.</text>
</comment>
<comment type="similarity">
    <text evidence="5">Belongs to the DEAD box helicase family. DDX46/PRP5 subfamily.</text>
</comment>
<dbReference type="EC" id="3.6.4.13"/>
<dbReference type="EMBL" id="AAFI02000013">
    <property type="protein sequence ID" value="EAL69472.1"/>
    <property type="molecule type" value="Genomic_DNA"/>
</dbReference>
<dbReference type="EMBL" id="X81823">
    <property type="protein sequence ID" value="CAA57417.1"/>
    <property type="molecule type" value="mRNA"/>
</dbReference>
<dbReference type="RefSeq" id="XP_643509.1">
    <property type="nucleotide sequence ID" value="XM_638417.1"/>
</dbReference>
<dbReference type="SMR" id="Q553B1"/>
<dbReference type="FunCoup" id="Q553B1">
    <property type="interactions" value="909"/>
</dbReference>
<dbReference type="STRING" id="44689.Q553B1"/>
<dbReference type="PaxDb" id="44689-DDB0191329"/>
<dbReference type="EnsemblProtists" id="EAL69472">
    <property type="protein sequence ID" value="EAL69472"/>
    <property type="gene ID" value="DDB_G0275443"/>
</dbReference>
<dbReference type="GeneID" id="8620090"/>
<dbReference type="KEGG" id="ddi:DDB_G0275443"/>
<dbReference type="dictyBase" id="DDB_G0275443">
    <property type="gene designation" value="helB1"/>
</dbReference>
<dbReference type="VEuPathDB" id="AmoebaDB:DDB_G0275443"/>
<dbReference type="eggNOG" id="KOG0334">
    <property type="taxonomic scope" value="Eukaryota"/>
</dbReference>
<dbReference type="HOGENOM" id="CLU_003041_0_1_1"/>
<dbReference type="InParanoid" id="Q553B1"/>
<dbReference type="OMA" id="QLPMKKW"/>
<dbReference type="PhylomeDB" id="Q553B1"/>
<dbReference type="Reactome" id="R-DDI-72163">
    <property type="pathway name" value="mRNA Splicing - Major Pathway"/>
</dbReference>
<dbReference type="PRO" id="PR:Q553B1"/>
<dbReference type="Proteomes" id="UP000002195">
    <property type="component" value="Chromosome 2"/>
</dbReference>
<dbReference type="GO" id="GO:0016607">
    <property type="term" value="C:nuclear speck"/>
    <property type="evidence" value="ECO:0007669"/>
    <property type="project" value="UniProtKB-SubCell"/>
</dbReference>
<dbReference type="GO" id="GO:0005634">
    <property type="term" value="C:nucleus"/>
    <property type="evidence" value="ECO:0000318"/>
    <property type="project" value="GO_Central"/>
</dbReference>
<dbReference type="GO" id="GO:0005524">
    <property type="term" value="F:ATP binding"/>
    <property type="evidence" value="ECO:0007669"/>
    <property type="project" value="UniProtKB-KW"/>
</dbReference>
<dbReference type="GO" id="GO:0016887">
    <property type="term" value="F:ATP hydrolysis activity"/>
    <property type="evidence" value="ECO:0007669"/>
    <property type="project" value="RHEA"/>
</dbReference>
<dbReference type="GO" id="GO:0003676">
    <property type="term" value="F:nucleic acid binding"/>
    <property type="evidence" value="ECO:0007669"/>
    <property type="project" value="InterPro"/>
</dbReference>
<dbReference type="GO" id="GO:0003724">
    <property type="term" value="F:RNA helicase activity"/>
    <property type="evidence" value="ECO:0007669"/>
    <property type="project" value="UniProtKB-EC"/>
</dbReference>
<dbReference type="GO" id="GO:0000398">
    <property type="term" value="P:mRNA splicing, via spliceosome"/>
    <property type="evidence" value="ECO:0000318"/>
    <property type="project" value="GO_Central"/>
</dbReference>
<dbReference type="CDD" id="cd17953">
    <property type="entry name" value="DEADc_DDX46"/>
    <property type="match status" value="1"/>
</dbReference>
<dbReference type="CDD" id="cd18787">
    <property type="entry name" value="SF2_C_DEAD"/>
    <property type="match status" value="1"/>
</dbReference>
<dbReference type="FunFam" id="3.40.50.300:FF:000079">
    <property type="entry name" value="probable ATP-dependent RNA helicase DDX17"/>
    <property type="match status" value="1"/>
</dbReference>
<dbReference type="Gene3D" id="3.40.50.300">
    <property type="entry name" value="P-loop containing nucleotide triphosphate hydrolases"/>
    <property type="match status" value="2"/>
</dbReference>
<dbReference type="InterPro" id="IPR011545">
    <property type="entry name" value="DEAD/DEAH_box_helicase_dom"/>
</dbReference>
<dbReference type="InterPro" id="IPR014001">
    <property type="entry name" value="Helicase_ATP-bd"/>
</dbReference>
<dbReference type="InterPro" id="IPR001650">
    <property type="entry name" value="Helicase_C-like"/>
</dbReference>
<dbReference type="InterPro" id="IPR027417">
    <property type="entry name" value="P-loop_NTPase"/>
</dbReference>
<dbReference type="InterPro" id="IPR056149">
    <property type="entry name" value="PRP5/DDX46/KHDC4_KH"/>
</dbReference>
<dbReference type="InterPro" id="IPR000629">
    <property type="entry name" value="RNA-helicase_DEAD-box_CS"/>
</dbReference>
<dbReference type="InterPro" id="IPR014014">
    <property type="entry name" value="RNA_helicase_DEAD_Q_motif"/>
</dbReference>
<dbReference type="PANTHER" id="PTHR47958">
    <property type="entry name" value="ATP-DEPENDENT RNA HELICASE DBP3"/>
    <property type="match status" value="1"/>
</dbReference>
<dbReference type="Pfam" id="PF00270">
    <property type="entry name" value="DEAD"/>
    <property type="match status" value="1"/>
</dbReference>
<dbReference type="Pfam" id="PF00271">
    <property type="entry name" value="Helicase_C"/>
    <property type="match status" value="1"/>
</dbReference>
<dbReference type="Pfam" id="PF23469">
    <property type="entry name" value="KH_12"/>
    <property type="match status" value="1"/>
</dbReference>
<dbReference type="SMART" id="SM00487">
    <property type="entry name" value="DEXDc"/>
    <property type="match status" value="1"/>
</dbReference>
<dbReference type="SMART" id="SM00490">
    <property type="entry name" value="HELICc"/>
    <property type="match status" value="1"/>
</dbReference>
<dbReference type="SUPFAM" id="SSF52540">
    <property type="entry name" value="P-loop containing nucleoside triphosphate hydrolases"/>
    <property type="match status" value="1"/>
</dbReference>
<dbReference type="PROSITE" id="PS00039">
    <property type="entry name" value="DEAD_ATP_HELICASE"/>
    <property type="match status" value="1"/>
</dbReference>
<dbReference type="PROSITE" id="PS51192">
    <property type="entry name" value="HELICASE_ATP_BIND_1"/>
    <property type="match status" value="1"/>
</dbReference>
<dbReference type="PROSITE" id="PS51194">
    <property type="entry name" value="HELICASE_CTER"/>
    <property type="match status" value="1"/>
</dbReference>
<dbReference type="PROSITE" id="PS51195">
    <property type="entry name" value="Q_MOTIF"/>
    <property type="match status" value="1"/>
</dbReference>
<sequence>MDEYDKKRRLEHGGSDRSRSSNDNRNSHGSSGNNYRDDRKDDRYYRDDRSHYNNNNNNNNNNNNNNNNNNGNGYRDDRNYSSQNKYQNHHQQSPPQQQQQQQNSSYVPSQPPQQQTQTQQQPHIQAPPPAKPRKSRFDQAPETIPIQAPQQPPMISNQPIFKQQPMYQQPMYQQKQQQPQPPIFQQQQKQQQPPIFQHHQPPPIYQQPPVYQQQQQQQQPVFQQQQQQRVATEAIQFQQTPQQLAIEQERLKQERENEKKIEQANLEEEMKKRREKVEQWRKQKLEQELKASGSSNSGSTSSPPTTTTTTTKTTAATTTATTSPLTIPSQQQQTATTSPIKKKWSLEEEEETAQPLVNTNIEQKEIKLPPTANIPAAAATTTSATINTTTIKQSIEEDDDIDPLDAYMENLNKEANLNLKKSKTSQMIDDDEKLEEESEGEDDGKDKTIKKGKKEMLHTDHTSIKYAEFQKNFYIEVPVLANMTETEVLDFRSELGVKITGKDCPKPIQSWAQAGLTEKVHLLLKKFQYEKPTSIQAQTIPAIMNGRDLIGIARTGSGKTLAFLLPMFRHILAQPKSAPGEGMIALIMSPTRELALQIHVECKKFSKVLGLRTACVYGGASISEQIAELKRGADIVVCTPGRMIDILCANNRRITNLRRVTFLVLDEADRMFDMGFGPQINCIVDSIRPDRQTIMFSATFPPKVENVAKKILNKPLEIIAGGRSIVSSDIEQFVEVRPTETRFRRLIELLSIWYHKGQILIFTNRQETTDNLYRQLSNSQYQCLSLHGSKDQTDRDETISDFKNKVKTILIATPLASRGLDIKDLNLVVNFDCPDHLEDYVHRVGRTGRAGNRGTAYTFITPDEERFSSSIIKALEQSGSKVPDELRKLNDTYEKKRKEGKDVLLAPTGFTGRGHKFDAAEEDKKNIERKQQRKAYGIEEEEEEEDEDKEKAEKEKLAAASAEKEKQLLSEKEKLDPATTNTIVIPGVDGTIITPSSLLQTDPSVPVGQQAINQIFGISQVTSSEEAIKKLQLAAQLGMKGNIQKLNNQITPLNQTHFIEELEINDYSQQARWKVTHKDALLEITNFTNTTITTKGTFFPPNKIPAPGERKLYLYIEGPSDASVKNAKSDIKKILDEVQSTHQSTGKYSVF</sequence>
<name>DDX46_DICDI</name>
<proteinExistence type="evidence at transcript level"/>
<feature type="chain" id="PRO_0000327435" description="ATP-dependent RNA helicase ddx46">
    <location>
        <begin position="1"/>
        <end position="1151"/>
    </location>
</feature>
<feature type="domain" description="Helicase ATP-binding" evidence="2">
    <location>
        <begin position="540"/>
        <end position="718"/>
    </location>
</feature>
<feature type="domain" description="Helicase C-terminal" evidence="3">
    <location>
        <begin position="729"/>
        <end position="890"/>
    </location>
</feature>
<feature type="region of interest" description="Disordered" evidence="4">
    <location>
        <begin position="1"/>
        <end position="138"/>
    </location>
</feature>
<feature type="region of interest" description="Disordered" evidence="4">
    <location>
        <begin position="166"/>
        <end position="224"/>
    </location>
</feature>
<feature type="region of interest" description="Disordered" evidence="4">
    <location>
        <begin position="287"/>
        <end position="358"/>
    </location>
</feature>
<feature type="region of interest" description="Disordered" evidence="4">
    <location>
        <begin position="424"/>
        <end position="449"/>
    </location>
</feature>
<feature type="region of interest" description="Disordered" evidence="4">
    <location>
        <begin position="904"/>
        <end position="972"/>
    </location>
</feature>
<feature type="short sequence motif" description="Q motif">
    <location>
        <begin position="509"/>
        <end position="537"/>
    </location>
</feature>
<feature type="short sequence motif" description="DEAD box">
    <location>
        <begin position="666"/>
        <end position="669"/>
    </location>
</feature>
<feature type="compositionally biased region" description="Basic and acidic residues" evidence="4">
    <location>
        <begin position="1"/>
        <end position="26"/>
    </location>
</feature>
<feature type="compositionally biased region" description="Basic and acidic residues" evidence="4">
    <location>
        <begin position="35"/>
        <end position="51"/>
    </location>
</feature>
<feature type="compositionally biased region" description="Low complexity" evidence="4">
    <location>
        <begin position="52"/>
        <end position="73"/>
    </location>
</feature>
<feature type="compositionally biased region" description="Polar residues" evidence="4">
    <location>
        <begin position="81"/>
        <end position="90"/>
    </location>
</feature>
<feature type="compositionally biased region" description="Low complexity" evidence="4">
    <location>
        <begin position="91"/>
        <end position="124"/>
    </location>
</feature>
<feature type="compositionally biased region" description="Low complexity" evidence="4">
    <location>
        <begin position="166"/>
        <end position="199"/>
    </location>
</feature>
<feature type="compositionally biased region" description="Low complexity" evidence="4">
    <location>
        <begin position="207"/>
        <end position="224"/>
    </location>
</feature>
<feature type="compositionally biased region" description="Low complexity" evidence="4">
    <location>
        <begin position="291"/>
        <end position="339"/>
    </location>
</feature>
<feature type="compositionally biased region" description="Acidic residues" evidence="4">
    <location>
        <begin position="428"/>
        <end position="443"/>
    </location>
</feature>
<feature type="compositionally biased region" description="Basic and acidic residues" evidence="4">
    <location>
        <begin position="915"/>
        <end position="930"/>
    </location>
</feature>
<feature type="compositionally biased region" description="Acidic residues" evidence="4">
    <location>
        <begin position="938"/>
        <end position="948"/>
    </location>
</feature>
<feature type="compositionally biased region" description="Basic and acidic residues" evidence="4">
    <location>
        <begin position="949"/>
        <end position="972"/>
    </location>
</feature>
<feature type="binding site" evidence="2">
    <location>
        <begin position="553"/>
        <end position="560"/>
    </location>
    <ligand>
        <name>ATP</name>
        <dbReference type="ChEBI" id="CHEBI:30616"/>
    </ligand>
</feature>
<gene>
    <name type="primary">helB1</name>
    <name type="synonym">ddx46</name>
    <name type="synonym">hel2A</name>
    <name type="ORF">DDB_G0275443</name>
</gene>